<keyword id="KW-1003">Cell membrane</keyword>
<keyword id="KW-0449">Lipoprotein</keyword>
<keyword id="KW-0472">Membrane</keyword>
<keyword id="KW-0564">Palmitate</keyword>
<keyword id="KW-0732">Signal</keyword>
<reference key="1">
    <citation type="journal article" date="2002" name="Lancet">
        <title>Genome and virulence determinants of high virulence community-acquired MRSA.</title>
        <authorList>
            <person name="Baba T."/>
            <person name="Takeuchi F."/>
            <person name="Kuroda M."/>
            <person name="Yuzawa H."/>
            <person name="Aoki K."/>
            <person name="Oguchi A."/>
            <person name="Nagai Y."/>
            <person name="Iwama N."/>
            <person name="Asano K."/>
            <person name="Naimi T."/>
            <person name="Kuroda H."/>
            <person name="Cui L."/>
            <person name="Yamamoto K."/>
            <person name="Hiramatsu K."/>
        </authorList>
    </citation>
    <scope>NUCLEOTIDE SEQUENCE [LARGE SCALE GENOMIC DNA]</scope>
    <source>
        <strain>MW2</strain>
    </source>
</reference>
<dbReference type="EMBL" id="BA000033">
    <property type="protein sequence ID" value="BAB94184.1"/>
    <property type="molecule type" value="Genomic_DNA"/>
</dbReference>
<dbReference type="SMR" id="Q8NYA3"/>
<dbReference type="KEGG" id="sam:MW0319"/>
<dbReference type="HOGENOM" id="CLU_050342_0_1_9"/>
<dbReference type="GO" id="GO:0005886">
    <property type="term" value="C:plasma membrane"/>
    <property type="evidence" value="ECO:0007669"/>
    <property type="project" value="UniProtKB-SubCell"/>
</dbReference>
<dbReference type="CDD" id="cd14656">
    <property type="entry name" value="Imelysin-like_EfeO"/>
    <property type="match status" value="1"/>
</dbReference>
<dbReference type="Gene3D" id="1.20.1420.20">
    <property type="entry name" value="M75 peptidase, HXXE motif"/>
    <property type="match status" value="1"/>
</dbReference>
<dbReference type="InterPro" id="IPR050894">
    <property type="entry name" value="EfeM/EfeO_iron_uptake"/>
</dbReference>
<dbReference type="InterPro" id="IPR018976">
    <property type="entry name" value="Imelysin-like"/>
</dbReference>
<dbReference type="InterPro" id="IPR034981">
    <property type="entry name" value="Imelysin-like_EfeO/Algp7"/>
</dbReference>
<dbReference type="InterPro" id="IPR038352">
    <property type="entry name" value="Imelysin_sf"/>
</dbReference>
<dbReference type="InterPro" id="IPR053377">
    <property type="entry name" value="Iron_uptake_EfeM/EfeO"/>
</dbReference>
<dbReference type="NCBIfam" id="NF041757">
    <property type="entry name" value="EfeO"/>
    <property type="match status" value="1"/>
</dbReference>
<dbReference type="PANTHER" id="PTHR39192">
    <property type="entry name" value="IRON UPTAKE SYSTEM COMPONENT EFEO"/>
    <property type="match status" value="1"/>
</dbReference>
<dbReference type="PANTHER" id="PTHR39192:SF1">
    <property type="entry name" value="IRON UPTAKE SYSTEM COMPONENT EFEO"/>
    <property type="match status" value="1"/>
</dbReference>
<dbReference type="Pfam" id="PF09375">
    <property type="entry name" value="Peptidase_M75"/>
    <property type="match status" value="1"/>
</dbReference>
<dbReference type="PROSITE" id="PS51257">
    <property type="entry name" value="PROKAR_LIPOPROTEIN"/>
    <property type="match status" value="1"/>
</dbReference>
<accession>Q8NYA3</accession>
<organism>
    <name type="scientific">Staphylococcus aureus (strain MW2)</name>
    <dbReference type="NCBI Taxonomy" id="196620"/>
    <lineage>
        <taxon>Bacteria</taxon>
        <taxon>Bacillati</taxon>
        <taxon>Bacillota</taxon>
        <taxon>Bacilli</taxon>
        <taxon>Bacillales</taxon>
        <taxon>Staphylococcaceae</taxon>
        <taxon>Staphylococcus</taxon>
    </lineage>
</organism>
<name>EFEMO_STAAW</name>
<comment type="subcellular location">
    <subcellularLocation>
        <location evidence="1">Cell membrane</location>
        <topology evidence="1">Lipid-anchor</topology>
    </subcellularLocation>
</comment>
<comment type="similarity">
    <text evidence="2">Belongs to the EfeM/EfeO family.</text>
</comment>
<evidence type="ECO:0000255" key="1">
    <source>
        <dbReference type="PROSITE-ProRule" id="PRU00303"/>
    </source>
</evidence>
<evidence type="ECO:0000305" key="2"/>
<proteinExistence type="inferred from homology"/>
<sequence>MKKLTTLLLASTLLIAACGNDDSKKDDSKTSKKDDGVKAELKQATKAYDKYTDEQLNEFLKGTEKFVKAIENNDMAQAKALYPKVRMYYERSEPVAEAFGDLDPKIDARLADMKEEKKEKEWSGYHKIEKALYEDKKIDDVTKKDAQQLLKDAKELHAKADTLDITPKLMLQGSVDLLNEVATSKITGEEEIYSHTDLYDFKANIEGAQKIYDLFKPILEKKDKKLSDDIQMNFDKVNQLLDKYKDNNGGYESFEKVSKKDRKAFADAVNALGEPLSKMAVITE</sequence>
<feature type="signal peptide" evidence="1">
    <location>
        <begin position="1"/>
        <end position="17"/>
    </location>
</feature>
<feature type="chain" id="PRO_0000278314" description="Efem/EfeO family lipoprotein">
    <location>
        <begin position="18"/>
        <end position="284"/>
    </location>
</feature>
<feature type="lipid moiety-binding region" description="N-palmitoyl cysteine" evidence="1">
    <location>
        <position position="18"/>
    </location>
</feature>
<feature type="lipid moiety-binding region" description="S-diacylglycerol cysteine" evidence="1">
    <location>
        <position position="18"/>
    </location>
</feature>
<gene>
    <name type="ordered locus">MW0319</name>
</gene>
<protein>
    <recommendedName>
        <fullName>Efem/EfeO family lipoprotein</fullName>
    </recommendedName>
</protein>